<keyword id="KW-0521">NADP</keyword>
<keyword id="KW-0560">Oxidoreductase</keyword>
<keyword id="KW-0627">Porphyrin biosynthesis</keyword>
<keyword id="KW-1185">Reference proteome</keyword>
<sequence length="446" mass="48858">MLITVVGLNHRTAPLAVREKLSFPEHTLKEVLRGLSDREGVESCVVISTCNRTEVYAVLSEEDGLQNIWCFLAERCGSPVEAIKSHTYNYSFGESVRHLFRVSSGLDSMVLGETQILGQVKQAYQFAQQVGTVNWLLNCAFQQALAVGKRVRTETGIDKNPVSISYAAVELARQTLGSLEGREVLIVGAGKMSELTVKHLLSHGVAGVIVSNRSYPRAVELAAQFGGRAVRFDELYRWMGHADIVISCTAASHYVIRAEPMTSVLAERGGRAIFFIDIAVPRDVDPAVGHLPGVVLYDIDSLQSVVDANLAERRRAAVAAERIIDAEVREFLLALGSRFVIPTVVALKKRGEEIKRNELDRALNRLGGELSERELKVISSMANSIVSQLLHEPITRLKKLALTPEGHFYSDALQKLFNLEPENGGVPTLVGRTESCPVSCLKGKGC</sequence>
<name>HEM1_DESAP</name>
<gene>
    <name evidence="1" type="primary">hemA</name>
    <name type="ordered locus">Daud_1348</name>
</gene>
<evidence type="ECO:0000255" key="1">
    <source>
        <dbReference type="HAMAP-Rule" id="MF_00087"/>
    </source>
</evidence>
<reference key="1">
    <citation type="submission" date="2007-10" db="EMBL/GenBank/DDBJ databases">
        <title>Complete sequence of chromosome of Desulforudis audaxviator MP104C.</title>
        <authorList>
            <person name="Copeland A."/>
            <person name="Lucas S."/>
            <person name="Lapidus A."/>
            <person name="Barry K."/>
            <person name="Glavina del Rio T."/>
            <person name="Dalin E."/>
            <person name="Tice H."/>
            <person name="Bruce D."/>
            <person name="Pitluck S."/>
            <person name="Lowry S.R."/>
            <person name="Larimer F."/>
            <person name="Land M.L."/>
            <person name="Hauser L."/>
            <person name="Kyrpides N."/>
            <person name="Ivanova N.N."/>
            <person name="Richardson P."/>
        </authorList>
    </citation>
    <scope>NUCLEOTIDE SEQUENCE [LARGE SCALE GENOMIC DNA]</scope>
    <source>
        <strain>MP104C</strain>
    </source>
</reference>
<accession>B1I4J1</accession>
<protein>
    <recommendedName>
        <fullName evidence="1">Glutamyl-tRNA reductase</fullName>
        <shortName evidence="1">GluTR</shortName>
        <ecNumber evidence="1">1.2.1.70</ecNumber>
    </recommendedName>
</protein>
<comment type="function">
    <text evidence="1">Catalyzes the NADPH-dependent reduction of glutamyl-tRNA(Glu) to glutamate 1-semialdehyde (GSA).</text>
</comment>
<comment type="catalytic activity">
    <reaction evidence="1">
        <text>(S)-4-amino-5-oxopentanoate + tRNA(Glu) + NADP(+) = L-glutamyl-tRNA(Glu) + NADPH + H(+)</text>
        <dbReference type="Rhea" id="RHEA:12344"/>
        <dbReference type="Rhea" id="RHEA-COMP:9663"/>
        <dbReference type="Rhea" id="RHEA-COMP:9680"/>
        <dbReference type="ChEBI" id="CHEBI:15378"/>
        <dbReference type="ChEBI" id="CHEBI:57501"/>
        <dbReference type="ChEBI" id="CHEBI:57783"/>
        <dbReference type="ChEBI" id="CHEBI:58349"/>
        <dbReference type="ChEBI" id="CHEBI:78442"/>
        <dbReference type="ChEBI" id="CHEBI:78520"/>
        <dbReference type="EC" id="1.2.1.70"/>
    </reaction>
</comment>
<comment type="pathway">
    <text evidence="1">Porphyrin-containing compound metabolism; protoporphyrin-IX biosynthesis; 5-aminolevulinate from L-glutamyl-tRNA(Glu): step 1/2.</text>
</comment>
<comment type="subunit">
    <text evidence="1">Homodimer.</text>
</comment>
<comment type="domain">
    <text evidence="1">Possesses an unusual extended V-shaped dimeric structure with each monomer consisting of three distinct domains arranged along a curved 'spinal' alpha-helix. The N-terminal catalytic domain specifically recognizes the glutamate moiety of the substrate. The second domain is the NADPH-binding domain, and the third C-terminal domain is responsible for dimerization.</text>
</comment>
<comment type="miscellaneous">
    <text evidence="1">During catalysis, the active site Cys acts as a nucleophile attacking the alpha-carbonyl group of tRNA-bound glutamate with the formation of a thioester intermediate between enzyme and glutamate, and the concomitant release of tRNA(Glu). The thioester intermediate is finally reduced by direct hydride transfer from NADPH, to form the product GSA.</text>
</comment>
<comment type="similarity">
    <text evidence="1">Belongs to the glutamyl-tRNA reductase family.</text>
</comment>
<feature type="chain" id="PRO_1000093131" description="Glutamyl-tRNA reductase">
    <location>
        <begin position="1"/>
        <end position="446"/>
    </location>
</feature>
<feature type="active site" description="Nucleophile" evidence="1">
    <location>
        <position position="50"/>
    </location>
</feature>
<feature type="binding site" evidence="1">
    <location>
        <begin position="49"/>
        <end position="52"/>
    </location>
    <ligand>
        <name>substrate</name>
    </ligand>
</feature>
<feature type="binding site" evidence="1">
    <location>
        <position position="108"/>
    </location>
    <ligand>
        <name>substrate</name>
    </ligand>
</feature>
<feature type="binding site" evidence="1">
    <location>
        <begin position="113"/>
        <end position="115"/>
    </location>
    <ligand>
        <name>substrate</name>
    </ligand>
</feature>
<feature type="binding site" evidence="1">
    <location>
        <position position="119"/>
    </location>
    <ligand>
        <name>substrate</name>
    </ligand>
</feature>
<feature type="binding site" evidence="1">
    <location>
        <begin position="188"/>
        <end position="193"/>
    </location>
    <ligand>
        <name>NADP(+)</name>
        <dbReference type="ChEBI" id="CHEBI:58349"/>
    </ligand>
</feature>
<feature type="site" description="Important for activity" evidence="1">
    <location>
        <position position="98"/>
    </location>
</feature>
<proteinExistence type="inferred from homology"/>
<dbReference type="EC" id="1.2.1.70" evidence="1"/>
<dbReference type="EMBL" id="CP000860">
    <property type="protein sequence ID" value="ACA59857.1"/>
    <property type="molecule type" value="Genomic_DNA"/>
</dbReference>
<dbReference type="RefSeq" id="WP_012302442.1">
    <property type="nucleotide sequence ID" value="NC_010424.1"/>
</dbReference>
<dbReference type="SMR" id="B1I4J1"/>
<dbReference type="STRING" id="477974.Daud_1348"/>
<dbReference type="KEGG" id="dau:Daud_1348"/>
<dbReference type="eggNOG" id="COG0373">
    <property type="taxonomic scope" value="Bacteria"/>
</dbReference>
<dbReference type="HOGENOM" id="CLU_035113_2_2_9"/>
<dbReference type="OrthoDB" id="110209at2"/>
<dbReference type="UniPathway" id="UPA00251">
    <property type="reaction ID" value="UER00316"/>
</dbReference>
<dbReference type="Proteomes" id="UP000008544">
    <property type="component" value="Chromosome"/>
</dbReference>
<dbReference type="GO" id="GO:0008883">
    <property type="term" value="F:glutamyl-tRNA reductase activity"/>
    <property type="evidence" value="ECO:0007669"/>
    <property type="project" value="UniProtKB-UniRule"/>
</dbReference>
<dbReference type="GO" id="GO:0050661">
    <property type="term" value="F:NADP binding"/>
    <property type="evidence" value="ECO:0007669"/>
    <property type="project" value="InterPro"/>
</dbReference>
<dbReference type="GO" id="GO:0019353">
    <property type="term" value="P:protoporphyrinogen IX biosynthetic process from glutamate"/>
    <property type="evidence" value="ECO:0007669"/>
    <property type="project" value="TreeGrafter"/>
</dbReference>
<dbReference type="CDD" id="cd05213">
    <property type="entry name" value="NAD_bind_Glutamyl_tRNA_reduct"/>
    <property type="match status" value="1"/>
</dbReference>
<dbReference type="FunFam" id="3.30.460.30:FF:000001">
    <property type="entry name" value="Glutamyl-tRNA reductase"/>
    <property type="match status" value="1"/>
</dbReference>
<dbReference type="FunFam" id="3.40.50.720:FF:000031">
    <property type="entry name" value="Glutamyl-tRNA reductase"/>
    <property type="match status" value="1"/>
</dbReference>
<dbReference type="Gene3D" id="3.30.460.30">
    <property type="entry name" value="Glutamyl-tRNA reductase, N-terminal domain"/>
    <property type="match status" value="1"/>
</dbReference>
<dbReference type="Gene3D" id="3.40.50.720">
    <property type="entry name" value="NAD(P)-binding Rossmann-like Domain"/>
    <property type="match status" value="1"/>
</dbReference>
<dbReference type="HAMAP" id="MF_00087">
    <property type="entry name" value="Glu_tRNA_reductase"/>
    <property type="match status" value="1"/>
</dbReference>
<dbReference type="InterPro" id="IPR000343">
    <property type="entry name" value="4pyrrol_synth_GluRdtase"/>
</dbReference>
<dbReference type="InterPro" id="IPR015896">
    <property type="entry name" value="4pyrrol_synth_GluRdtase_dimer"/>
</dbReference>
<dbReference type="InterPro" id="IPR015895">
    <property type="entry name" value="4pyrrol_synth_GluRdtase_N"/>
</dbReference>
<dbReference type="InterPro" id="IPR018214">
    <property type="entry name" value="GluRdtase_CS"/>
</dbReference>
<dbReference type="InterPro" id="IPR036453">
    <property type="entry name" value="GluRdtase_dimer_dom_sf"/>
</dbReference>
<dbReference type="InterPro" id="IPR036343">
    <property type="entry name" value="GluRdtase_N_sf"/>
</dbReference>
<dbReference type="InterPro" id="IPR036291">
    <property type="entry name" value="NAD(P)-bd_dom_sf"/>
</dbReference>
<dbReference type="InterPro" id="IPR006151">
    <property type="entry name" value="Shikm_DH/Glu-tRNA_Rdtase"/>
</dbReference>
<dbReference type="NCBIfam" id="TIGR01035">
    <property type="entry name" value="hemA"/>
    <property type="match status" value="1"/>
</dbReference>
<dbReference type="NCBIfam" id="NF000744">
    <property type="entry name" value="PRK00045.1-3"/>
    <property type="match status" value="1"/>
</dbReference>
<dbReference type="PANTHER" id="PTHR43013">
    <property type="entry name" value="GLUTAMYL-TRNA REDUCTASE"/>
    <property type="match status" value="1"/>
</dbReference>
<dbReference type="PANTHER" id="PTHR43013:SF1">
    <property type="entry name" value="GLUTAMYL-TRNA REDUCTASE"/>
    <property type="match status" value="1"/>
</dbReference>
<dbReference type="Pfam" id="PF00745">
    <property type="entry name" value="GlutR_dimer"/>
    <property type="match status" value="1"/>
</dbReference>
<dbReference type="Pfam" id="PF05201">
    <property type="entry name" value="GlutR_N"/>
    <property type="match status" value="1"/>
</dbReference>
<dbReference type="Pfam" id="PF01488">
    <property type="entry name" value="Shikimate_DH"/>
    <property type="match status" value="1"/>
</dbReference>
<dbReference type="PIRSF" id="PIRSF000445">
    <property type="entry name" value="4pyrrol_synth_GluRdtase"/>
    <property type="match status" value="1"/>
</dbReference>
<dbReference type="SUPFAM" id="SSF69742">
    <property type="entry name" value="Glutamyl tRNA-reductase catalytic, N-terminal domain"/>
    <property type="match status" value="1"/>
</dbReference>
<dbReference type="SUPFAM" id="SSF69075">
    <property type="entry name" value="Glutamyl tRNA-reductase dimerization domain"/>
    <property type="match status" value="1"/>
</dbReference>
<dbReference type="SUPFAM" id="SSF51735">
    <property type="entry name" value="NAD(P)-binding Rossmann-fold domains"/>
    <property type="match status" value="1"/>
</dbReference>
<dbReference type="PROSITE" id="PS00747">
    <property type="entry name" value="GLUTR"/>
    <property type="match status" value="1"/>
</dbReference>
<organism>
    <name type="scientific">Desulforudis audaxviator (strain MP104C)</name>
    <dbReference type="NCBI Taxonomy" id="477974"/>
    <lineage>
        <taxon>Bacteria</taxon>
        <taxon>Bacillati</taxon>
        <taxon>Bacillota</taxon>
        <taxon>Clostridia</taxon>
        <taxon>Thermoanaerobacterales</taxon>
        <taxon>Candidatus Desulforudaceae</taxon>
        <taxon>Candidatus Desulforudis</taxon>
    </lineage>
</organism>